<comment type="function">
    <text evidence="1">Synthesizes trehalose from ADP-glucose and glucose. Has a much lower activity toward UDP-glucose and GDP-glucose. The reaction is reversible, the equilibrium strongly favors trehalose synthesis.</text>
</comment>
<comment type="catalytic activity">
    <reaction evidence="1">
        <text>an NDP-alpha-D-glucose + D-glucose = alpha,alpha-trehalose + a ribonucleoside 5'-diphosphate + H(+)</text>
        <dbReference type="Rhea" id="RHEA:47416"/>
        <dbReference type="ChEBI" id="CHEBI:4167"/>
        <dbReference type="ChEBI" id="CHEBI:15378"/>
        <dbReference type="ChEBI" id="CHEBI:16551"/>
        <dbReference type="ChEBI" id="CHEBI:57930"/>
        <dbReference type="ChEBI" id="CHEBI:76533"/>
        <dbReference type="EC" id="2.4.1.245"/>
    </reaction>
</comment>
<comment type="cofactor">
    <cofactor evidence="1">
        <name>Mg(2+)</name>
        <dbReference type="ChEBI" id="CHEBI:18420"/>
    </cofactor>
</comment>
<comment type="biophysicochemical properties">
    <kinetics>
        <KM evidence="1">1.14 mM for ADP-glucose</KM>
        <KM evidence="1">6.2 mM for glucose</KM>
        <KM evidence="1">11.5 mM for trehalose</KM>
        <Vmax evidence="1">160.0 umol/min/mg enzyme toward ADP-glucose</Vmax>
        <Vmax evidence="1">220.0 umol/min/mg enzyme toward glucose</Vmax>
        <Vmax evidence="1">17.0 umol/min/mg enzyme toward trehalose</Vmax>
    </kinetics>
    <phDependence>
        <text evidence="1">Optimum pH is 6.5. Only 13% of activity is retained at pH 7.5.</text>
    </phDependence>
    <temperatureDependence>
        <text evidence="1">Optimum temperature is 90 degrees Celsius. 65% of activity remains at 100 degrees Celsius.</text>
    </temperatureDependence>
</comment>
<comment type="subunit">
    <text evidence="1">Homodimer.</text>
</comment>
<comment type="induction">
    <text evidence="1">By maltose, less efficiently by trehalose, and even less efficiently by sucrose.</text>
</comment>
<comment type="similarity">
    <text evidence="3">Belongs to the glycosyltransferase group 1 family. Glycosyltransferase 4 subfamily.</text>
</comment>
<accession>Q7LYW5</accession>
<accession>H3ZP64</accession>
<protein>
    <recommendedName>
        <fullName>Trehalose synthase</fullName>
        <ecNumber>2.4.1.245</ecNumber>
    </recommendedName>
    <alternativeName>
        <fullName evidence="2">Trehalose glycosyltransferring synthase</fullName>
    </alternativeName>
</protein>
<organism>
    <name type="scientific">Thermococcus litoralis (strain ATCC 51850 / DSM 5473 / JCM 8560 / NS-C)</name>
    <dbReference type="NCBI Taxonomy" id="523849"/>
    <lineage>
        <taxon>Archaea</taxon>
        <taxon>Methanobacteriati</taxon>
        <taxon>Methanobacteriota</taxon>
        <taxon>Thermococci</taxon>
        <taxon>Thermococcales</taxon>
        <taxon>Thermococcaceae</taxon>
        <taxon>Thermococcus</taxon>
    </lineage>
</organism>
<keyword id="KW-0119">Carbohydrate metabolism</keyword>
<keyword id="KW-0313">Glucose metabolism</keyword>
<keyword id="KW-0328">Glycosyltransferase</keyword>
<keyword id="KW-0460">Magnesium</keyword>
<keyword id="KW-0808">Transferase</keyword>
<gene>
    <name evidence="2" type="primary">treT</name>
    <name type="ORF">OCC_03547</name>
</gene>
<evidence type="ECO:0000269" key="1">
    <source>
    </source>
</evidence>
<evidence type="ECO:0000303" key="2">
    <source>
    </source>
</evidence>
<evidence type="ECO:0000305" key="3"/>
<evidence type="ECO:0000312" key="4">
    <source>
        <dbReference type="EMBL" id="AAG45391.1"/>
    </source>
</evidence>
<feature type="chain" id="PRO_0000405302" description="Trehalose synthase">
    <location>
        <begin position="1"/>
        <end position="412"/>
    </location>
</feature>
<reference evidence="4" key="1">
    <citation type="journal article" date="2000" name="Mol. Microbiol.">
        <title>Evidence of recent lateral gene transfer among hyperthermophilic archaea.</title>
        <authorList>
            <person name="Diruggiero J."/>
            <person name="Dunn D."/>
            <person name="Maeder D.L."/>
            <person name="Holley-Shanks R."/>
            <person name="Chatard J."/>
            <person name="Horlacher R."/>
            <person name="Robb F.T."/>
            <person name="Boos W."/>
            <person name="Weiss R.B."/>
        </authorList>
    </citation>
    <scope>NUCLEOTIDE SEQUENCE [GENOMIC DNA]</scope>
    <source>
        <strain>ATCC 51850 / DSM 5473 / JCM 8560 / NS-C</strain>
    </source>
</reference>
<reference key="2">
    <citation type="journal article" date="2012" name="J. Bacteriol.">
        <title>Genome sequence of the model hyperthermophilic archaeon Thermococcus litoralis NS-C.</title>
        <authorList>
            <person name="Gardner A.F."/>
            <person name="Kumar S."/>
            <person name="Perler F.B."/>
        </authorList>
    </citation>
    <scope>NUCLEOTIDE SEQUENCE [LARGE SCALE GENOMIC DNA]</scope>
    <source>
        <strain>ATCC 51850 / DSM 5473 / JCM 8560 / NS-C</strain>
    </source>
</reference>
<reference evidence="3" key="3">
    <citation type="journal article" date="2004" name="J. Biol. Chem.">
        <title>TreT, a novel trehalose glycosyltransferring synthase of the hyperthermophilic archaeon Thermococcus litoralis.</title>
        <authorList>
            <person name="Qu Q."/>
            <person name="Lee S.J."/>
            <person name="Boos W."/>
        </authorList>
    </citation>
    <scope>FUNCTION</scope>
    <scope>CATALYTIC ACTIVITY</scope>
    <scope>COFACTOR</scope>
    <scope>BIOPHYSICOCHEMICAL PROPERTIES</scope>
    <scope>SUBUNIT</scope>
    <scope>INDUCTION</scope>
</reference>
<proteinExistence type="evidence at protein level"/>
<sequence length="412" mass="48017">MYEVTKFGGEGKRLEDYREIIGDEALEAIKAKAENLKDKSFVHVNSTSFGGGVAEILHNLVPLMRDVGIDARWFVIEGTNEFFNVTKSFHNALQGNKELRLTEEMKKLYLEINKKNAEDIDLTQFDYVLIHDPQPAPLIEFYEKRQPWIWRCHIDLSDPNLEFWKFLRQFVEKYDRYIFHMEEYVQEDLNQEKVVIMPPSIDPLSEKNMELSESEILKTLERFDVDPERPIITQVARFDPWKGVFDVIDVYRKVKEKIPEVQLLLVGVMAHDDPEGWIYFEKTLRKIGEDYDIKVLTNLTGVHAREVNAFQRASDVILQMSIREGFGLTVTEAMWKEKPVVGRAVGGIKLQIVDGKTGFLVKDVNDAIEKTLYLLEHKDVAQEMGKNAKERIKENFIITKHLERYLDLLNSF</sequence>
<dbReference type="EC" id="2.4.1.245"/>
<dbReference type="EMBL" id="AF307053">
    <property type="protein sequence ID" value="AAG45391.1"/>
    <property type="molecule type" value="Genomic_DNA"/>
</dbReference>
<dbReference type="EMBL" id="CP006670">
    <property type="protein sequence ID" value="EHR78231.1"/>
    <property type="molecule type" value="Genomic_DNA"/>
</dbReference>
<dbReference type="RefSeq" id="WP_004068720.1">
    <property type="nucleotide sequence ID" value="NC_022084.1"/>
</dbReference>
<dbReference type="SMR" id="Q7LYW5"/>
<dbReference type="STRING" id="523849.OCC_03547"/>
<dbReference type="CAZy" id="GT4">
    <property type="family name" value="Glycosyltransferase Family 4"/>
</dbReference>
<dbReference type="PaxDb" id="523849-OCC_03547"/>
<dbReference type="GeneID" id="16548946"/>
<dbReference type="KEGG" id="tlt:OCC_03547"/>
<dbReference type="HOGENOM" id="CLU_045353_0_0_2"/>
<dbReference type="OrthoDB" id="132546at2157"/>
<dbReference type="BioCyc" id="MetaCyc:MONOMER-14090"/>
<dbReference type="Proteomes" id="UP000015502">
    <property type="component" value="Chromosome"/>
</dbReference>
<dbReference type="GO" id="GO:0102986">
    <property type="term" value="F:trehalose synthase activity"/>
    <property type="evidence" value="ECO:0007669"/>
    <property type="project" value="UniProtKB-EC"/>
</dbReference>
<dbReference type="GO" id="GO:0006006">
    <property type="term" value="P:glucose metabolic process"/>
    <property type="evidence" value="ECO:0007669"/>
    <property type="project" value="UniProtKB-KW"/>
</dbReference>
<dbReference type="Gene3D" id="3.40.50.2000">
    <property type="entry name" value="Glycogen Phosphorylase B"/>
    <property type="match status" value="2"/>
</dbReference>
<dbReference type="InterPro" id="IPR001296">
    <property type="entry name" value="Glyco_trans_1"/>
</dbReference>
<dbReference type="InterPro" id="IPR052078">
    <property type="entry name" value="Trehalose_Metab_GTase"/>
</dbReference>
<dbReference type="InterPro" id="IPR053462">
    <property type="entry name" value="Trehalose_synthase_GT"/>
</dbReference>
<dbReference type="InterPro" id="IPR049438">
    <property type="entry name" value="TreT_GT1"/>
</dbReference>
<dbReference type="NCBIfam" id="NF041139">
    <property type="entry name" value="TreT_Thcocales"/>
    <property type="match status" value="1"/>
</dbReference>
<dbReference type="PANTHER" id="PTHR47779">
    <property type="entry name" value="SYNTHASE (CCG-9), PUTATIVE (AFU_ORTHOLOGUE AFUA_3G12100)-RELATED"/>
    <property type="match status" value="1"/>
</dbReference>
<dbReference type="PANTHER" id="PTHR47779:SF1">
    <property type="entry name" value="SYNTHASE (CCG-9), PUTATIVE (AFU_ORTHOLOGUE AFUA_3G12100)-RELATED"/>
    <property type="match status" value="1"/>
</dbReference>
<dbReference type="Pfam" id="PF00534">
    <property type="entry name" value="Glycos_transf_1"/>
    <property type="match status" value="1"/>
</dbReference>
<dbReference type="Pfam" id="PF21269">
    <property type="entry name" value="TreT_GT1"/>
    <property type="match status" value="1"/>
</dbReference>
<dbReference type="SUPFAM" id="SSF53756">
    <property type="entry name" value="UDP-Glycosyltransferase/glycogen phosphorylase"/>
    <property type="match status" value="1"/>
</dbReference>
<name>TRET_THELN</name>